<sequence>MTISILGARVIDPKTGLDQVTDLHLDGGRIAAIGAAPAGFSASRTIQADGVVAAPGLVDLGVSLREPGYSRKGNIRSETRAAVAGGVTSLCCPPQTRPVLDTLAVAELILDRAREAANSKVYPIGALTKGLEGEQLAELVALRDTGCVAFGNGLKQIPNNRTLARALEYAATFDLTVVFHSQDRDLAEGGLAHEGAMASFLGLPGIPESAETVALARNLLLVEQSGVRAHFSQITSARGAQLIAQAQELGLPVTADVALYQLILTDESVRQFSSLYHVQPPLRTAKDRDGLRAAVKSGVIQAISSHHQPHERDAKLAPFGATEPGISSVELLLPLAMTLVQDGLLDLPTLLARLSSGPAAALRVPAGELKVGGAADLVLFDPQASTVAGEQWSSRGENCPFIGHCLPGAVRYTLVDGHVCHGPE</sequence>
<proteinExistence type="evidence at protein level"/>
<dbReference type="EMBL" id="M97254">
    <property type="protein sequence ID" value="AAA69779.1"/>
    <property type="molecule type" value="Genomic_DNA"/>
</dbReference>
<dbReference type="PIR" id="B56144">
    <property type="entry name" value="B56144"/>
</dbReference>
<dbReference type="SMR" id="Q59712"/>
<dbReference type="eggNOG" id="COG0044">
    <property type="taxonomic scope" value="Bacteria"/>
</dbReference>
<dbReference type="GO" id="GO:0005737">
    <property type="term" value="C:cytoplasm"/>
    <property type="evidence" value="ECO:0007669"/>
    <property type="project" value="TreeGrafter"/>
</dbReference>
<dbReference type="GO" id="GO:0004038">
    <property type="term" value="F:allantoinase activity"/>
    <property type="evidence" value="ECO:0007669"/>
    <property type="project" value="TreeGrafter"/>
</dbReference>
<dbReference type="GO" id="GO:0004151">
    <property type="term" value="F:dihydroorotase activity"/>
    <property type="evidence" value="ECO:0007669"/>
    <property type="project" value="InterPro"/>
</dbReference>
<dbReference type="GO" id="GO:0046872">
    <property type="term" value="F:metal ion binding"/>
    <property type="evidence" value="ECO:0007669"/>
    <property type="project" value="InterPro"/>
</dbReference>
<dbReference type="GO" id="GO:0006145">
    <property type="term" value="P:purine nucleobase catabolic process"/>
    <property type="evidence" value="ECO:0007669"/>
    <property type="project" value="TreeGrafter"/>
</dbReference>
<dbReference type="GO" id="GO:0006221">
    <property type="term" value="P:pyrimidine nucleotide biosynthetic process"/>
    <property type="evidence" value="ECO:0007669"/>
    <property type="project" value="UniProtKB-KW"/>
</dbReference>
<dbReference type="CDD" id="cd01317">
    <property type="entry name" value="DHOase_IIa"/>
    <property type="match status" value="1"/>
</dbReference>
<dbReference type="Gene3D" id="3.20.20.140">
    <property type="entry name" value="Metal-dependent hydrolases"/>
    <property type="match status" value="1"/>
</dbReference>
<dbReference type="Gene3D" id="2.30.40.10">
    <property type="entry name" value="Urease, subunit C, domain 1"/>
    <property type="match status" value="1"/>
</dbReference>
<dbReference type="InterPro" id="IPR006680">
    <property type="entry name" value="Amidohydro-rel"/>
</dbReference>
<dbReference type="InterPro" id="IPR004722">
    <property type="entry name" value="DHOase"/>
</dbReference>
<dbReference type="InterPro" id="IPR050138">
    <property type="entry name" value="DHOase/Allantoinase_Hydrolase"/>
</dbReference>
<dbReference type="InterPro" id="IPR011059">
    <property type="entry name" value="Metal-dep_hydrolase_composite"/>
</dbReference>
<dbReference type="InterPro" id="IPR032466">
    <property type="entry name" value="Metal_Hydrolase"/>
</dbReference>
<dbReference type="NCBIfam" id="NF005791">
    <property type="entry name" value="PRK07627.1"/>
    <property type="match status" value="1"/>
</dbReference>
<dbReference type="NCBIfam" id="NF006838">
    <property type="entry name" value="PRK09357.1-3"/>
    <property type="match status" value="1"/>
</dbReference>
<dbReference type="NCBIfam" id="TIGR00857">
    <property type="entry name" value="pyrC_multi"/>
    <property type="match status" value="1"/>
</dbReference>
<dbReference type="PANTHER" id="PTHR43668">
    <property type="entry name" value="ALLANTOINASE"/>
    <property type="match status" value="1"/>
</dbReference>
<dbReference type="PANTHER" id="PTHR43668:SF2">
    <property type="entry name" value="ALLANTOINASE"/>
    <property type="match status" value="1"/>
</dbReference>
<dbReference type="Pfam" id="PF01979">
    <property type="entry name" value="Amidohydro_1"/>
    <property type="match status" value="1"/>
</dbReference>
<dbReference type="SUPFAM" id="SSF51338">
    <property type="entry name" value="Composite domain of metallo-dependent hydrolases"/>
    <property type="match status" value="1"/>
</dbReference>
<dbReference type="SUPFAM" id="SSF51556">
    <property type="entry name" value="Metallo-dependent hydrolases"/>
    <property type="match status" value="1"/>
</dbReference>
<reference key="1">
    <citation type="journal article" date="1995" name="J. Bacteriol.">
        <title>Aspartate transcarbamoylase genes of Pseudomonas putida: requirement for an inactive dihydroorotase for assembly into the dodecameric holoenzyme.</title>
        <authorList>
            <person name="Schurr M.J."/>
            <person name="Vickrey J.F."/>
            <person name="Kumar A.P."/>
            <person name="Campbell A.L."/>
            <person name="Cunin R."/>
            <person name="Benjamin R.C."/>
            <person name="Shanley M.S."/>
            <person name="O'Donovan G.A."/>
        </authorList>
    </citation>
    <scope>NUCLEOTIDE SEQUENCE [GENOMIC DNA]</scope>
    <scope>SUBUNIT</scope>
    <source>
        <strain>PPN-1</strain>
    </source>
</reference>
<accession>Q59712</accession>
<protein>
    <recommendedName>
        <fullName>Dihydroorotase-like protein</fullName>
    </recommendedName>
    <alternativeName>
        <fullName>Aspartate carbamoyltransferase 44 kDa non-catalytic chain</fullName>
    </alternativeName>
</protein>
<keyword id="KW-0665">Pyrimidine biosynthesis</keyword>
<organism>
    <name type="scientific">Pseudomonas putida</name>
    <name type="common">Arthrobacter siderocapsulatus</name>
    <dbReference type="NCBI Taxonomy" id="303"/>
    <lineage>
        <taxon>Bacteria</taxon>
        <taxon>Pseudomonadati</taxon>
        <taxon>Pseudomonadota</taxon>
        <taxon>Gammaproteobacteria</taxon>
        <taxon>Pseudomonadales</taxon>
        <taxon>Pseudomonadaceae</taxon>
        <taxon>Pseudomonas</taxon>
    </lineage>
</organism>
<evidence type="ECO:0000269" key="1">
    <source>
    </source>
</evidence>
<evidence type="ECO:0000303" key="2">
    <source>
    </source>
</evidence>
<evidence type="ECO:0000305" key="3"/>
<evidence type="ECO:0000305" key="4">
    <source>
    </source>
</evidence>
<name>PYRX_PSEPU</name>
<feature type="chain" id="PRO_0000147286" description="Dihydroorotase-like protein">
    <location>
        <begin position="1"/>
        <end position="424"/>
    </location>
</feature>
<gene>
    <name evidence="2" type="primary">pyrC'</name>
</gene>
<comment type="function">
    <text evidence="4">Non-functional DHOase.</text>
</comment>
<comment type="subunit">
    <text evidence="1">Heterododecamer of 6 active PyrB subunits and 6 non-catalytic PyrC' subunits.</text>
</comment>
<comment type="similarity">
    <text evidence="3">Belongs to the metallo-dependent hydrolases superfamily. DHOase family. PyrC' subfamily.</text>
</comment>